<accession>A6WFI5</accession>
<proteinExistence type="evidence at protein level"/>
<evidence type="ECO:0000250" key="1">
    <source>
        <dbReference type="UniProtKB" id="O53581"/>
    </source>
</evidence>
<evidence type="ECO:0000250" key="2">
    <source>
        <dbReference type="UniProtKB" id="P00590"/>
    </source>
</evidence>
<evidence type="ECO:0000255" key="3"/>
<evidence type="ECO:0000256" key="4">
    <source>
        <dbReference type="SAM" id="MobiDB-lite"/>
    </source>
</evidence>
<evidence type="ECO:0000269" key="5">
    <source>
    </source>
</evidence>
<evidence type="ECO:0000303" key="6">
    <source>
    </source>
</evidence>
<evidence type="ECO:0000305" key="7"/>
<evidence type="ECO:0000305" key="8">
    <source>
    </source>
</evidence>
<evidence type="ECO:0000312" key="9">
    <source>
        <dbReference type="EMBL" id="ABS05574.1"/>
    </source>
</evidence>
<evidence type="ECO:0000312" key="10">
    <source>
        <dbReference type="Proteomes" id="UP000001116"/>
    </source>
</evidence>
<keyword id="KW-1015">Disulfide bond</keyword>
<keyword id="KW-0378">Hydrolase</keyword>
<keyword id="KW-1185">Reference proteome</keyword>
<keyword id="KW-0964">Secreted</keyword>
<keyword id="KW-0719">Serine esterase</keyword>
<keyword id="KW-0732">Signal</keyword>
<reference evidence="10" key="1">
    <citation type="journal article" date="2008" name="PLoS ONE">
        <title>Survival in nuclear waste, extreme resistance, and potential applications gleaned from the genome sequence of Kineococcus radiotolerans SRS30216.</title>
        <authorList>
            <person name="Bagwell C.E."/>
            <person name="Bhat S."/>
            <person name="Hawkins G.M."/>
            <person name="Smith B.W."/>
            <person name="Biswas T."/>
            <person name="Hoover T.R."/>
            <person name="Saunders E."/>
            <person name="Han C.S."/>
            <person name="Tsodikov O.V."/>
            <person name="Shimkets L.J."/>
        </authorList>
    </citation>
    <scope>NUCLEOTIDE SEQUENCE [LARGE SCALE GENOMIC DNA]</scope>
    <source>
        <strain evidence="10">ATCC BAA-149 / DSM 14245 / SRS30216</strain>
    </source>
</reference>
<reference evidence="7" key="2">
    <citation type="journal article" date="2021" name="Appl. Environ. Microbiol.">
        <title>A Novel Actinobacterial Cutinase Containing a Non-Catalytic Polymer-Binding Domain.</title>
        <authorList>
            <person name="Abokitse K."/>
            <person name="Grosse S."/>
            <person name="Leisch H."/>
            <person name="Corbeil C.R."/>
            <person name="Perrin-Sarazin F."/>
            <person name="Lau P.C.K."/>
        </authorList>
    </citation>
    <scope>FUNCTION</scope>
    <scope>CATALYTIC ACTIVITY</scope>
    <scope>BIOPHYSICOCHEMICAL PROPERTIES</scope>
    <scope>SUBCELLULAR LOCATION</scope>
    <scope>BIOTECHNOLOGY</scope>
</reference>
<sequence length="294" mass="29136">MLRARPSHRLASAAAVVAATGAALLAGSSPAAAATCSDVDVVFARGTGETPGLGVVGGPFVRSLTGELSDRTVTSHAVDYAASSSQASAGPGATAMSAHVREVAAACPSTRFVLGGYSQGATVTDIALGIRTGTTTGTPVPAELAGRVAAVVVFGNPLGLSGRTIATASSTYGPKSKDYCNSSDSVCGSAPKTGTGGHLSYASNGSTTDGARFAAGLVRAAGTPTTPTPTPTPTPVPTTCVRDSTRDHVAADRAVSLYGRAYARGSRDSLGATSSYNVVSLQQVEGGWRLVTAC</sequence>
<comment type="function">
    <text evidence="5">Catalyzes the hydrolysis of cutin, a polyester that forms the structure of plant cuticle (PubMed:34705546). Shows esterase activity towards p-nitrophenol-linked aliphatic esters (pNP-aliphatic esters) (PubMed:34705546). Can depolymerize synthetic polyesters such as poly(epsilon-caprolactone) (PCL) and poly(1,3-propylene adipate) (PPA) (PubMed:34705546). Exhibits some activity on poly(lactic acid) (PLA) (PubMed:34705546). Can bind but not hydrolyze poly(hydroxybutyrate) (PHB) (PubMed:34705546).</text>
</comment>
<comment type="catalytic activity">
    <reaction evidence="5">
        <text>cutin + H2O = cutin monomers.</text>
        <dbReference type="EC" id="3.1.1.74"/>
    </reaction>
</comment>
<comment type="catalytic activity">
    <reaction evidence="5">
        <text>a tetradecanoate ester + H2O = an aliphatic alcohol + tetradecanoate + H(+)</text>
        <dbReference type="Rhea" id="RHEA:47388"/>
        <dbReference type="ChEBI" id="CHEBI:2571"/>
        <dbReference type="ChEBI" id="CHEBI:15377"/>
        <dbReference type="ChEBI" id="CHEBI:15378"/>
        <dbReference type="ChEBI" id="CHEBI:30807"/>
        <dbReference type="ChEBI" id="CHEBI:87691"/>
    </reaction>
    <physiologicalReaction direction="left-to-right" evidence="5">
        <dbReference type="Rhea" id="RHEA:47389"/>
    </physiologicalReaction>
</comment>
<comment type="catalytic activity">
    <reaction evidence="5">
        <text>hexadecanoate ester + H2O = an aliphatic alcohol + hexadecanoate + H(+)</text>
        <dbReference type="Rhea" id="RHEA:47392"/>
        <dbReference type="ChEBI" id="CHEBI:2571"/>
        <dbReference type="ChEBI" id="CHEBI:7896"/>
        <dbReference type="ChEBI" id="CHEBI:15377"/>
        <dbReference type="ChEBI" id="CHEBI:15378"/>
        <dbReference type="ChEBI" id="CHEBI:25835"/>
    </reaction>
    <physiologicalReaction direction="left-to-right" evidence="5">
        <dbReference type="Rhea" id="RHEA:47393"/>
    </physiologicalReaction>
</comment>
<comment type="catalytic activity">
    <reaction evidence="5">
        <text>a butanoate ester + H2O = an aliphatic alcohol + butanoate + H(+)</text>
        <dbReference type="Rhea" id="RHEA:47348"/>
        <dbReference type="ChEBI" id="CHEBI:2571"/>
        <dbReference type="ChEBI" id="CHEBI:15377"/>
        <dbReference type="ChEBI" id="CHEBI:15378"/>
        <dbReference type="ChEBI" id="CHEBI:17968"/>
        <dbReference type="ChEBI" id="CHEBI:50477"/>
    </reaction>
    <physiologicalReaction direction="left-to-right" evidence="5">
        <dbReference type="Rhea" id="RHEA:47349"/>
    </physiologicalReaction>
</comment>
<comment type="catalytic activity">
    <reaction evidence="5">
        <text>an octanoate ester + H2O = an aliphatic alcohol + octanoate + H(+)</text>
        <dbReference type="Rhea" id="RHEA:47356"/>
        <dbReference type="ChEBI" id="CHEBI:2571"/>
        <dbReference type="ChEBI" id="CHEBI:15377"/>
        <dbReference type="ChEBI" id="CHEBI:15378"/>
        <dbReference type="ChEBI" id="CHEBI:25646"/>
        <dbReference type="ChEBI" id="CHEBI:87657"/>
    </reaction>
</comment>
<comment type="biophysicochemical properties">
    <phDependence>
        <text evidence="5">Optimum pH is 8.</text>
    </phDependence>
</comment>
<comment type="subcellular location">
    <subcellularLocation>
        <location evidence="8">Secreted</location>
    </subcellularLocation>
</comment>
<comment type="biotechnology">
    <text evidence="5">Shows promising applications in improving the surface properties of natural textile fibers.</text>
</comment>
<comment type="similarity">
    <text evidence="7">Belongs to the cutinase family.</text>
</comment>
<feature type="signal peptide" evidence="8">
    <location>
        <begin position="1"/>
        <end position="33"/>
    </location>
</feature>
<feature type="chain" id="PRO_5002704814" description="Cutinase" evidence="3">
    <location>
        <begin position="34"/>
        <end position="294"/>
    </location>
</feature>
<feature type="region of interest" description="Disordered" evidence="4">
    <location>
        <begin position="222"/>
        <end position="241"/>
    </location>
</feature>
<feature type="region of interest" description="May be involved in substrate binding" evidence="5">
    <location>
        <begin position="240"/>
        <end position="294"/>
    </location>
</feature>
<feature type="compositionally biased region" description="Pro residues" evidence="4">
    <location>
        <begin position="226"/>
        <end position="236"/>
    </location>
</feature>
<feature type="active site" description="Nucleophile" evidence="1">
    <location>
        <position position="118"/>
    </location>
</feature>
<feature type="active site" evidence="1">
    <location>
        <position position="184"/>
    </location>
</feature>
<feature type="active site" description="Proton donor/acceptor" evidence="1">
    <location>
        <position position="198"/>
    </location>
</feature>
<feature type="site" description="Transition state stabilizer" evidence="2">
    <location>
        <position position="119"/>
    </location>
</feature>
<feature type="disulfide bond" evidence="1">
    <location>
        <begin position="36"/>
        <end position="107"/>
    </location>
</feature>
<feature type="disulfide bond" evidence="1">
    <location>
        <begin position="180"/>
        <end position="187"/>
    </location>
</feature>
<organism evidence="10">
    <name type="scientific">Kineococcus radiotolerans (strain ATCC BAA-149 / DSM 14245 / SRS30216)</name>
    <dbReference type="NCBI Taxonomy" id="266940"/>
    <lineage>
        <taxon>Bacteria</taxon>
        <taxon>Bacillati</taxon>
        <taxon>Actinomycetota</taxon>
        <taxon>Actinomycetes</taxon>
        <taxon>Kineosporiales</taxon>
        <taxon>Kineosporiaceae</taxon>
        <taxon>Kineococcus</taxon>
    </lineage>
</organism>
<name>CUTI_KINRD</name>
<protein>
    <recommendedName>
        <fullName evidence="6">Cutinase</fullName>
        <ecNumber evidence="5">3.1.1.74</ecNumber>
    </recommendedName>
    <alternativeName>
        <fullName evidence="6">KrCUT</fullName>
    </alternativeName>
</protein>
<gene>
    <name evidence="6" type="primary">cut</name>
    <name evidence="9" type="ordered locus">Krad_4111</name>
    <name evidence="6" type="ordered locus">YP_001363838.1</name>
</gene>
<dbReference type="EC" id="3.1.1.74" evidence="5"/>
<dbReference type="EMBL" id="CP000750">
    <property type="protein sequence ID" value="ABS05574.1"/>
    <property type="molecule type" value="Genomic_DNA"/>
</dbReference>
<dbReference type="RefSeq" id="WP_012086138.1">
    <property type="nucleotide sequence ID" value="NC_009664.2"/>
</dbReference>
<dbReference type="SMR" id="A6WFI5"/>
<dbReference type="STRING" id="266940.Krad_4111"/>
<dbReference type="ESTHER" id="kinrd-a6wfi5">
    <property type="family name" value="Cutinase"/>
</dbReference>
<dbReference type="KEGG" id="kra:Krad_4111"/>
<dbReference type="eggNOG" id="ENOG5030I1N">
    <property type="taxonomic scope" value="Bacteria"/>
</dbReference>
<dbReference type="HOGENOM" id="CLU_040058_3_1_11"/>
<dbReference type="Proteomes" id="UP000001116">
    <property type="component" value="Chromosome"/>
</dbReference>
<dbReference type="GO" id="GO:0005576">
    <property type="term" value="C:extracellular region"/>
    <property type="evidence" value="ECO:0007669"/>
    <property type="project" value="UniProtKB-SubCell"/>
</dbReference>
<dbReference type="GO" id="GO:0052689">
    <property type="term" value="F:carboxylic ester hydrolase activity"/>
    <property type="evidence" value="ECO:0000314"/>
    <property type="project" value="UniProtKB"/>
</dbReference>
<dbReference type="GO" id="GO:0050525">
    <property type="term" value="F:cutinase activity"/>
    <property type="evidence" value="ECO:0000314"/>
    <property type="project" value="UniProtKB"/>
</dbReference>
<dbReference type="Gene3D" id="3.40.50.1820">
    <property type="entry name" value="alpha/beta hydrolase"/>
    <property type="match status" value="1"/>
</dbReference>
<dbReference type="InterPro" id="IPR029058">
    <property type="entry name" value="AB_hydrolase_fold"/>
</dbReference>
<dbReference type="InterPro" id="IPR000675">
    <property type="entry name" value="Cutinase/axe"/>
</dbReference>
<dbReference type="PANTHER" id="PTHR33630:SF9">
    <property type="entry name" value="CUTINASE 4"/>
    <property type="match status" value="1"/>
</dbReference>
<dbReference type="PANTHER" id="PTHR33630">
    <property type="entry name" value="CUTINASE RV1984C-RELATED-RELATED"/>
    <property type="match status" value="1"/>
</dbReference>
<dbReference type="Pfam" id="PF01083">
    <property type="entry name" value="Cutinase"/>
    <property type="match status" value="1"/>
</dbReference>
<dbReference type="SMART" id="SM01110">
    <property type="entry name" value="Cutinase"/>
    <property type="match status" value="1"/>
</dbReference>
<dbReference type="SUPFAM" id="SSF53474">
    <property type="entry name" value="alpha/beta-Hydrolases"/>
    <property type="match status" value="1"/>
</dbReference>